<dbReference type="EC" id="2.5.1.145" evidence="1"/>
<dbReference type="EMBL" id="CP000269">
    <property type="protein sequence ID" value="ABR88991.1"/>
    <property type="molecule type" value="Genomic_DNA"/>
</dbReference>
<dbReference type="RefSeq" id="WP_012078514.1">
    <property type="nucleotide sequence ID" value="NC_009659.1"/>
</dbReference>
<dbReference type="SMR" id="A6SVP3"/>
<dbReference type="STRING" id="375286.mma_0650"/>
<dbReference type="KEGG" id="mms:mma_0650"/>
<dbReference type="eggNOG" id="COG0682">
    <property type="taxonomic scope" value="Bacteria"/>
</dbReference>
<dbReference type="HOGENOM" id="CLU_013386_1_0_4"/>
<dbReference type="OrthoDB" id="871140at2"/>
<dbReference type="UniPathway" id="UPA00664"/>
<dbReference type="Proteomes" id="UP000006388">
    <property type="component" value="Chromosome"/>
</dbReference>
<dbReference type="GO" id="GO:0005886">
    <property type="term" value="C:plasma membrane"/>
    <property type="evidence" value="ECO:0007669"/>
    <property type="project" value="UniProtKB-SubCell"/>
</dbReference>
<dbReference type="GO" id="GO:0008961">
    <property type="term" value="F:phosphatidylglycerol-prolipoprotein diacylglyceryl transferase activity"/>
    <property type="evidence" value="ECO:0007669"/>
    <property type="project" value="UniProtKB-UniRule"/>
</dbReference>
<dbReference type="GO" id="GO:0042158">
    <property type="term" value="P:lipoprotein biosynthetic process"/>
    <property type="evidence" value="ECO:0007669"/>
    <property type="project" value="UniProtKB-UniRule"/>
</dbReference>
<dbReference type="HAMAP" id="MF_01147">
    <property type="entry name" value="Lgt"/>
    <property type="match status" value="1"/>
</dbReference>
<dbReference type="InterPro" id="IPR001640">
    <property type="entry name" value="Lgt"/>
</dbReference>
<dbReference type="NCBIfam" id="TIGR00544">
    <property type="entry name" value="lgt"/>
    <property type="match status" value="1"/>
</dbReference>
<dbReference type="PANTHER" id="PTHR30589:SF0">
    <property type="entry name" value="PHOSPHATIDYLGLYCEROL--PROLIPOPROTEIN DIACYLGLYCERYL TRANSFERASE"/>
    <property type="match status" value="1"/>
</dbReference>
<dbReference type="PANTHER" id="PTHR30589">
    <property type="entry name" value="PROLIPOPROTEIN DIACYLGLYCERYL TRANSFERASE"/>
    <property type="match status" value="1"/>
</dbReference>
<dbReference type="Pfam" id="PF01790">
    <property type="entry name" value="LGT"/>
    <property type="match status" value="1"/>
</dbReference>
<dbReference type="PROSITE" id="PS01311">
    <property type="entry name" value="LGT"/>
    <property type="match status" value="1"/>
</dbReference>
<name>LGT_JANMA</name>
<organism>
    <name type="scientific">Janthinobacterium sp. (strain Marseille)</name>
    <name type="common">Minibacterium massiliensis</name>
    <dbReference type="NCBI Taxonomy" id="375286"/>
    <lineage>
        <taxon>Bacteria</taxon>
        <taxon>Pseudomonadati</taxon>
        <taxon>Pseudomonadota</taxon>
        <taxon>Betaproteobacteria</taxon>
        <taxon>Burkholderiales</taxon>
        <taxon>Oxalobacteraceae</taxon>
        <taxon>Janthinobacterium</taxon>
    </lineage>
</organism>
<sequence length="265" mass="30117">MWIHPMPDPVALSIGPLAIRWYGLMYLAAFAQFIWLARIRIKQPHIARAGWKKEDIDDMLFYGVLGVIIGGRLGEVLFYDPSYYFSNPLEIFKVWKGGMSFHGGFLGVLLAMSIWARRQGRNVLDVWDFIAPMVPLGYAFGRLGNFINAELPGRIADASLPWAMIWPNVDNLPRHPSPLYQALVDGLLMFILLWLFARKERPRMAVGGMFALLYGSARFFTEYFRMPDYEVHFAGITISAGQMLSVPLIVLGIVMLLIAYRKKPA</sequence>
<protein>
    <recommendedName>
        <fullName evidence="1">Phosphatidylglycerol--prolipoprotein diacylglyceryl transferase</fullName>
        <ecNumber evidence="1">2.5.1.145</ecNumber>
    </recommendedName>
</protein>
<reference key="1">
    <citation type="journal article" date="2007" name="PLoS Genet.">
        <title>Genome analysis of Minibacterium massiliensis highlights the convergent evolution of water-living bacteria.</title>
        <authorList>
            <person name="Audic S."/>
            <person name="Robert C."/>
            <person name="Campagna B."/>
            <person name="Parinello H."/>
            <person name="Claverie J.-M."/>
            <person name="Raoult D."/>
            <person name="Drancourt M."/>
        </authorList>
    </citation>
    <scope>NUCLEOTIDE SEQUENCE [LARGE SCALE GENOMIC DNA]</scope>
    <source>
        <strain>Marseille</strain>
    </source>
</reference>
<evidence type="ECO:0000255" key="1">
    <source>
        <dbReference type="HAMAP-Rule" id="MF_01147"/>
    </source>
</evidence>
<accession>A6SVP3</accession>
<feature type="chain" id="PRO_1000053443" description="Phosphatidylglycerol--prolipoprotein diacylglyceryl transferase">
    <location>
        <begin position="1"/>
        <end position="265"/>
    </location>
</feature>
<feature type="transmembrane region" description="Helical" evidence="1">
    <location>
        <begin position="17"/>
        <end position="37"/>
    </location>
</feature>
<feature type="transmembrane region" description="Helical" evidence="1">
    <location>
        <begin position="59"/>
        <end position="79"/>
    </location>
</feature>
<feature type="transmembrane region" description="Helical" evidence="1">
    <location>
        <begin position="94"/>
        <end position="114"/>
    </location>
</feature>
<feature type="transmembrane region" description="Helical" evidence="1">
    <location>
        <begin position="123"/>
        <end position="143"/>
    </location>
</feature>
<feature type="transmembrane region" description="Helical" evidence="1">
    <location>
        <begin position="177"/>
        <end position="197"/>
    </location>
</feature>
<feature type="transmembrane region" description="Helical" evidence="1">
    <location>
        <begin position="204"/>
        <end position="224"/>
    </location>
</feature>
<feature type="transmembrane region" description="Helical" evidence="1">
    <location>
        <begin position="238"/>
        <end position="258"/>
    </location>
</feature>
<feature type="binding site" evidence="1">
    <location>
        <position position="142"/>
    </location>
    <ligand>
        <name>a 1,2-diacyl-sn-glycero-3-phospho-(1'-sn-glycerol)</name>
        <dbReference type="ChEBI" id="CHEBI:64716"/>
    </ligand>
</feature>
<gene>
    <name evidence="1" type="primary">lgt</name>
    <name type="ordered locus">mma_0650</name>
</gene>
<proteinExistence type="inferred from homology"/>
<comment type="function">
    <text evidence="1">Catalyzes the transfer of the diacylglyceryl group from phosphatidylglycerol to the sulfhydryl group of the N-terminal cysteine of a prolipoprotein, the first step in the formation of mature lipoproteins.</text>
</comment>
<comment type="catalytic activity">
    <reaction evidence="1">
        <text>L-cysteinyl-[prolipoprotein] + a 1,2-diacyl-sn-glycero-3-phospho-(1'-sn-glycerol) = an S-1,2-diacyl-sn-glyceryl-L-cysteinyl-[prolipoprotein] + sn-glycerol 1-phosphate + H(+)</text>
        <dbReference type="Rhea" id="RHEA:56712"/>
        <dbReference type="Rhea" id="RHEA-COMP:14679"/>
        <dbReference type="Rhea" id="RHEA-COMP:14680"/>
        <dbReference type="ChEBI" id="CHEBI:15378"/>
        <dbReference type="ChEBI" id="CHEBI:29950"/>
        <dbReference type="ChEBI" id="CHEBI:57685"/>
        <dbReference type="ChEBI" id="CHEBI:64716"/>
        <dbReference type="ChEBI" id="CHEBI:140658"/>
        <dbReference type="EC" id="2.5.1.145"/>
    </reaction>
</comment>
<comment type="pathway">
    <text evidence="1">Protein modification; lipoprotein biosynthesis (diacylglyceryl transfer).</text>
</comment>
<comment type="subcellular location">
    <subcellularLocation>
        <location evidence="1">Cell inner membrane</location>
        <topology evidence="1">Multi-pass membrane protein</topology>
    </subcellularLocation>
</comment>
<comment type="similarity">
    <text evidence="1">Belongs to the Lgt family.</text>
</comment>
<keyword id="KW-0997">Cell inner membrane</keyword>
<keyword id="KW-1003">Cell membrane</keyword>
<keyword id="KW-0472">Membrane</keyword>
<keyword id="KW-0808">Transferase</keyword>
<keyword id="KW-0812">Transmembrane</keyword>
<keyword id="KW-1133">Transmembrane helix</keyword>